<accession>P87142</accession>
<accession>P78911</accession>
<gene>
    <name type="ORF">SPAC57A7.12</name>
</gene>
<feature type="chain" id="PRO_0000078399" description="Heat shock protein 70 homolog C57A7.12">
    <location>
        <begin position="1"/>
        <end position="566"/>
    </location>
</feature>
<feature type="binding site" evidence="1">
    <location>
        <begin position="39"/>
        <end position="46"/>
    </location>
    <ligand>
        <name>ATP</name>
        <dbReference type="ChEBI" id="CHEBI:30616"/>
    </ligand>
</feature>
<feature type="modified residue" description="Phosphoserine" evidence="2">
    <location>
        <position position="86"/>
    </location>
</feature>
<feature type="modified residue" description="Phosphoserine" evidence="2">
    <location>
        <position position="500"/>
    </location>
</feature>
<feature type="sequence conflict" description="In Ref. 2; BAA13923." evidence="3" ref="2">
    <original>S</original>
    <variation>P</variation>
    <location>
        <position position="63"/>
    </location>
</feature>
<feature type="sequence conflict" description="In Ref. 2; BAA13923." evidence="3" ref="2">
    <original>L</original>
    <variation>H</variation>
    <location>
        <position position="103"/>
    </location>
</feature>
<feature type="sequence conflict" description="In Ref. 2; BAA13923." evidence="3" ref="2">
    <original>A</original>
    <variation>S</variation>
    <location>
        <position position="110"/>
    </location>
</feature>
<feature type="sequence conflict" description="In Ref. 2; BAA13923." evidence="3" ref="2">
    <original>D</original>
    <variation>G</variation>
    <location>
        <position position="128"/>
    </location>
</feature>
<feature type="sequence conflict" description="In Ref. 2; BAA13923." evidence="3" ref="2">
    <original>A</original>
    <variation>V</variation>
    <location>
        <position position="285"/>
    </location>
</feature>
<dbReference type="EMBL" id="CU329670">
    <property type="protein sequence ID" value="CAB08770.1"/>
    <property type="molecule type" value="Genomic_DNA"/>
</dbReference>
<dbReference type="EMBL" id="D89262">
    <property type="protein sequence ID" value="BAA13923.1"/>
    <property type="molecule type" value="mRNA"/>
</dbReference>
<dbReference type="PIR" id="T38942">
    <property type="entry name" value="T38942"/>
</dbReference>
<dbReference type="PIR" id="T43188">
    <property type="entry name" value="T43188"/>
</dbReference>
<dbReference type="RefSeq" id="NP_593369.1">
    <property type="nucleotide sequence ID" value="NM_001018801.2"/>
</dbReference>
<dbReference type="SMR" id="P87142"/>
<dbReference type="BioGRID" id="278607">
    <property type="interactions" value="5"/>
</dbReference>
<dbReference type="FunCoup" id="P87142">
    <property type="interactions" value="20"/>
</dbReference>
<dbReference type="IntAct" id="P87142">
    <property type="interactions" value="1"/>
</dbReference>
<dbReference type="STRING" id="284812.P87142"/>
<dbReference type="iPTMnet" id="P87142"/>
<dbReference type="PaxDb" id="4896-SPAC57A7.12.1"/>
<dbReference type="EnsemblFungi" id="SPAC57A7.12.1">
    <property type="protein sequence ID" value="SPAC57A7.12.1:pep"/>
    <property type="gene ID" value="SPAC57A7.12"/>
</dbReference>
<dbReference type="KEGG" id="spo:2542131"/>
<dbReference type="PomBase" id="SPAC57A7.12"/>
<dbReference type="VEuPathDB" id="FungiDB:SPAC57A7.12"/>
<dbReference type="eggNOG" id="KOG0101">
    <property type="taxonomic scope" value="Eukaryota"/>
</dbReference>
<dbReference type="HOGENOM" id="CLU_005965_0_3_1"/>
<dbReference type="InParanoid" id="P87142"/>
<dbReference type="OMA" id="DQVLMDH"/>
<dbReference type="PhylomeDB" id="P87142"/>
<dbReference type="PRO" id="PR:P87142"/>
<dbReference type="Proteomes" id="UP000002485">
    <property type="component" value="Chromosome I"/>
</dbReference>
<dbReference type="GO" id="GO:0005737">
    <property type="term" value="C:cytoplasm"/>
    <property type="evidence" value="ECO:0000318"/>
    <property type="project" value="GO_Central"/>
</dbReference>
<dbReference type="GO" id="GO:0005829">
    <property type="term" value="C:cytosol"/>
    <property type="evidence" value="ECO:0007005"/>
    <property type="project" value="PomBase"/>
</dbReference>
<dbReference type="GO" id="GO:0005634">
    <property type="term" value="C:nucleus"/>
    <property type="evidence" value="ECO:0007005"/>
    <property type="project" value="PomBase"/>
</dbReference>
<dbReference type="GO" id="GO:0005886">
    <property type="term" value="C:plasma membrane"/>
    <property type="evidence" value="ECO:0000318"/>
    <property type="project" value="GO_Central"/>
</dbReference>
<dbReference type="GO" id="GO:0005524">
    <property type="term" value="F:ATP binding"/>
    <property type="evidence" value="ECO:0007669"/>
    <property type="project" value="UniProtKB-KW"/>
</dbReference>
<dbReference type="GO" id="GO:0016887">
    <property type="term" value="F:ATP hydrolysis activity"/>
    <property type="evidence" value="ECO:0000318"/>
    <property type="project" value="GO_Central"/>
</dbReference>
<dbReference type="GO" id="GO:0140662">
    <property type="term" value="F:ATP-dependent protein folding chaperone"/>
    <property type="evidence" value="ECO:0007669"/>
    <property type="project" value="InterPro"/>
</dbReference>
<dbReference type="GO" id="GO:0031072">
    <property type="term" value="F:heat shock protein binding"/>
    <property type="evidence" value="ECO:0000318"/>
    <property type="project" value="GO_Central"/>
</dbReference>
<dbReference type="GO" id="GO:0044183">
    <property type="term" value="F:protein folding chaperone"/>
    <property type="evidence" value="ECO:0000318"/>
    <property type="project" value="GO_Central"/>
</dbReference>
<dbReference type="GO" id="GO:0051082">
    <property type="term" value="F:unfolded protein binding"/>
    <property type="evidence" value="ECO:0000266"/>
    <property type="project" value="PomBase"/>
</dbReference>
<dbReference type="GO" id="GO:0051083">
    <property type="term" value="P:'de novo' cotranslational protein folding"/>
    <property type="evidence" value="ECO:0000266"/>
    <property type="project" value="PomBase"/>
</dbReference>
<dbReference type="GO" id="GO:0051085">
    <property type="term" value="P:chaperone cofactor-dependent protein refolding"/>
    <property type="evidence" value="ECO:0000318"/>
    <property type="project" value="GO_Central"/>
</dbReference>
<dbReference type="GO" id="GO:0042026">
    <property type="term" value="P:protein refolding"/>
    <property type="evidence" value="ECO:0000318"/>
    <property type="project" value="GO_Central"/>
</dbReference>
<dbReference type="CDD" id="cd10232">
    <property type="entry name" value="ASKHA_NBD_HSP70_ScSsz1p-like"/>
    <property type="match status" value="1"/>
</dbReference>
<dbReference type="FunFam" id="3.90.640.10:FF:000010">
    <property type="entry name" value="heat shock 70 kDa protein 14"/>
    <property type="match status" value="1"/>
</dbReference>
<dbReference type="FunFam" id="3.30.30.30:FF:000009">
    <property type="entry name" value="Heat shock protein Hsp70"/>
    <property type="match status" value="1"/>
</dbReference>
<dbReference type="Gene3D" id="3.30.30.30">
    <property type="match status" value="1"/>
</dbReference>
<dbReference type="Gene3D" id="3.30.420.40">
    <property type="match status" value="2"/>
</dbReference>
<dbReference type="Gene3D" id="3.90.640.10">
    <property type="entry name" value="Actin, Chain A, domain 4"/>
    <property type="match status" value="1"/>
</dbReference>
<dbReference type="Gene3D" id="2.60.34.10">
    <property type="entry name" value="Substrate Binding Domain Of DNAk, Chain A, domain 1"/>
    <property type="match status" value="1"/>
</dbReference>
<dbReference type="InterPro" id="IPR043129">
    <property type="entry name" value="ATPase_NBD"/>
</dbReference>
<dbReference type="InterPro" id="IPR029047">
    <property type="entry name" value="HSP70_peptide-bd_sf"/>
</dbReference>
<dbReference type="InterPro" id="IPR013126">
    <property type="entry name" value="Hsp_70_fam"/>
</dbReference>
<dbReference type="PANTHER" id="PTHR45639:SF32">
    <property type="entry name" value="HEAT SHOCK PROTEIN PDR13"/>
    <property type="match status" value="1"/>
</dbReference>
<dbReference type="PANTHER" id="PTHR45639">
    <property type="entry name" value="HSC70CB, ISOFORM G-RELATED"/>
    <property type="match status" value="1"/>
</dbReference>
<dbReference type="Pfam" id="PF00012">
    <property type="entry name" value="HSP70"/>
    <property type="match status" value="1"/>
</dbReference>
<dbReference type="PRINTS" id="PR00301">
    <property type="entry name" value="HEATSHOCK70"/>
</dbReference>
<dbReference type="SUPFAM" id="SSF53067">
    <property type="entry name" value="Actin-like ATPase domain"/>
    <property type="match status" value="2"/>
</dbReference>
<dbReference type="SUPFAM" id="SSF100920">
    <property type="entry name" value="Heat shock protein 70kD (HSP70), peptide-binding domain"/>
    <property type="match status" value="1"/>
</dbReference>
<name>YDMC_SCHPO</name>
<sequence>MQLKLTKTLPFSENFIMADSEEYKTVIGISFGNQNSSIAFNRDGKTDVLANEEGNRQIPSILSYHGDQEYHGVQARGQLVRNADNSVTNFRDLLGKSHDELTLHHCHYSANPVNVEGQIGFKITVQEDEESDPKEKILTAHEASVRHLRRLTESAEDFLGTKVNGCVMSVPVYFTDAQRKALESAANEAGLPVLQLIHDPAAVILALMYSEEVLIDKTVVVANFGATRSEVSVVSVKGGLMTILASVHDENLGGEQLTDVLVNFFAKEFEKKNGIDPRKNARSLAKLRAQCEITKRVLSNGTTASAAVDSLADGIDFHSSINRLRYDLAASATLNRMADLVTEAVEKANMEPFDISEVILAGGASNTPKLTSLMESIFPEQTIIRSSSSVTPLQLDPSELTAIGSGVQASLIGHFDAADIAASTDAQVVDVPHLTAPIGINEGENFVTIFDIETALPARKTVEVIAPKEGAAFIPIYEAERSVKVTKVEPEPIDEEEAFSDDEEEEPEEIKERIAIPKTLIATITLPDVSPNAKIELVLQIDAEGKLTASARPKDGKGTNVRGSTA</sequence>
<comment type="similarity">
    <text evidence="3">Belongs to the heat shock protein 70 family.</text>
</comment>
<reference key="1">
    <citation type="journal article" date="2002" name="Nature">
        <title>The genome sequence of Schizosaccharomyces pombe.</title>
        <authorList>
            <person name="Wood V."/>
            <person name="Gwilliam R."/>
            <person name="Rajandream M.A."/>
            <person name="Lyne M.H."/>
            <person name="Lyne R."/>
            <person name="Stewart A."/>
            <person name="Sgouros J.G."/>
            <person name="Peat N."/>
            <person name="Hayles J."/>
            <person name="Baker S.G."/>
            <person name="Basham D."/>
            <person name="Bowman S."/>
            <person name="Brooks K."/>
            <person name="Brown D."/>
            <person name="Brown S."/>
            <person name="Chillingworth T."/>
            <person name="Churcher C.M."/>
            <person name="Collins M."/>
            <person name="Connor R."/>
            <person name="Cronin A."/>
            <person name="Davis P."/>
            <person name="Feltwell T."/>
            <person name="Fraser A."/>
            <person name="Gentles S."/>
            <person name="Goble A."/>
            <person name="Hamlin N."/>
            <person name="Harris D.E."/>
            <person name="Hidalgo J."/>
            <person name="Hodgson G."/>
            <person name="Holroyd S."/>
            <person name="Hornsby T."/>
            <person name="Howarth S."/>
            <person name="Huckle E.J."/>
            <person name="Hunt S."/>
            <person name="Jagels K."/>
            <person name="James K.D."/>
            <person name="Jones L."/>
            <person name="Jones M."/>
            <person name="Leather S."/>
            <person name="McDonald S."/>
            <person name="McLean J."/>
            <person name="Mooney P."/>
            <person name="Moule S."/>
            <person name="Mungall K.L."/>
            <person name="Murphy L.D."/>
            <person name="Niblett D."/>
            <person name="Odell C."/>
            <person name="Oliver K."/>
            <person name="O'Neil S."/>
            <person name="Pearson D."/>
            <person name="Quail M.A."/>
            <person name="Rabbinowitsch E."/>
            <person name="Rutherford K.M."/>
            <person name="Rutter S."/>
            <person name="Saunders D."/>
            <person name="Seeger K."/>
            <person name="Sharp S."/>
            <person name="Skelton J."/>
            <person name="Simmonds M.N."/>
            <person name="Squares R."/>
            <person name="Squares S."/>
            <person name="Stevens K."/>
            <person name="Taylor K."/>
            <person name="Taylor R.G."/>
            <person name="Tivey A."/>
            <person name="Walsh S.V."/>
            <person name="Warren T."/>
            <person name="Whitehead S."/>
            <person name="Woodward J.R."/>
            <person name="Volckaert G."/>
            <person name="Aert R."/>
            <person name="Robben J."/>
            <person name="Grymonprez B."/>
            <person name="Weltjens I."/>
            <person name="Vanstreels E."/>
            <person name="Rieger M."/>
            <person name="Schaefer M."/>
            <person name="Mueller-Auer S."/>
            <person name="Gabel C."/>
            <person name="Fuchs M."/>
            <person name="Duesterhoeft A."/>
            <person name="Fritzc C."/>
            <person name="Holzer E."/>
            <person name="Moestl D."/>
            <person name="Hilbert H."/>
            <person name="Borzym K."/>
            <person name="Langer I."/>
            <person name="Beck A."/>
            <person name="Lehrach H."/>
            <person name="Reinhardt R."/>
            <person name="Pohl T.M."/>
            <person name="Eger P."/>
            <person name="Zimmermann W."/>
            <person name="Wedler H."/>
            <person name="Wambutt R."/>
            <person name="Purnelle B."/>
            <person name="Goffeau A."/>
            <person name="Cadieu E."/>
            <person name="Dreano S."/>
            <person name="Gloux S."/>
            <person name="Lelaure V."/>
            <person name="Mottier S."/>
            <person name="Galibert F."/>
            <person name="Aves S.J."/>
            <person name="Xiang Z."/>
            <person name="Hunt C."/>
            <person name="Moore K."/>
            <person name="Hurst S.M."/>
            <person name="Lucas M."/>
            <person name="Rochet M."/>
            <person name="Gaillardin C."/>
            <person name="Tallada V.A."/>
            <person name="Garzon A."/>
            <person name="Thode G."/>
            <person name="Daga R.R."/>
            <person name="Cruzado L."/>
            <person name="Jimenez J."/>
            <person name="Sanchez M."/>
            <person name="del Rey F."/>
            <person name="Benito J."/>
            <person name="Dominguez A."/>
            <person name="Revuelta J.L."/>
            <person name="Moreno S."/>
            <person name="Armstrong J."/>
            <person name="Forsburg S.L."/>
            <person name="Cerutti L."/>
            <person name="Lowe T."/>
            <person name="McCombie W.R."/>
            <person name="Paulsen I."/>
            <person name="Potashkin J."/>
            <person name="Shpakovski G.V."/>
            <person name="Ussery D."/>
            <person name="Barrell B.G."/>
            <person name="Nurse P."/>
        </authorList>
    </citation>
    <scope>NUCLEOTIDE SEQUENCE [LARGE SCALE GENOMIC DNA]</scope>
    <source>
        <strain>972 / ATCC 24843</strain>
    </source>
</reference>
<reference key="2">
    <citation type="journal article" date="1997" name="DNA Res.">
        <title>Identification of open reading frames in Schizosaccharomyces pombe cDNAs.</title>
        <authorList>
            <person name="Yoshioka S."/>
            <person name="Kato K."/>
            <person name="Nakai K."/>
            <person name="Okayama H."/>
            <person name="Nojima H."/>
        </authorList>
    </citation>
    <scope>NUCLEOTIDE SEQUENCE [LARGE SCALE MRNA] OF 7-566</scope>
    <source>
        <strain>PR745</strain>
    </source>
</reference>
<reference key="3">
    <citation type="journal article" date="2008" name="J. Proteome Res.">
        <title>Phosphoproteome analysis of fission yeast.</title>
        <authorList>
            <person name="Wilson-Grady J.T."/>
            <person name="Villen J."/>
            <person name="Gygi S.P."/>
        </authorList>
    </citation>
    <scope>PHOSPHORYLATION [LARGE SCALE ANALYSIS] AT SER-86 AND SER-500</scope>
    <scope>IDENTIFICATION BY MASS SPECTROMETRY</scope>
</reference>
<evidence type="ECO:0000255" key="1"/>
<evidence type="ECO:0000269" key="2">
    <source>
    </source>
</evidence>
<evidence type="ECO:0000305" key="3"/>
<organism>
    <name type="scientific">Schizosaccharomyces pombe (strain 972 / ATCC 24843)</name>
    <name type="common">Fission yeast</name>
    <dbReference type="NCBI Taxonomy" id="284812"/>
    <lineage>
        <taxon>Eukaryota</taxon>
        <taxon>Fungi</taxon>
        <taxon>Dikarya</taxon>
        <taxon>Ascomycota</taxon>
        <taxon>Taphrinomycotina</taxon>
        <taxon>Schizosaccharomycetes</taxon>
        <taxon>Schizosaccharomycetales</taxon>
        <taxon>Schizosaccharomycetaceae</taxon>
        <taxon>Schizosaccharomyces</taxon>
    </lineage>
</organism>
<proteinExistence type="evidence at protein level"/>
<protein>
    <recommendedName>
        <fullName>Heat shock protein 70 homolog C57A7.12</fullName>
    </recommendedName>
</protein>
<keyword id="KW-0067">ATP-binding</keyword>
<keyword id="KW-0547">Nucleotide-binding</keyword>
<keyword id="KW-0597">Phosphoprotein</keyword>
<keyword id="KW-1185">Reference proteome</keyword>